<accession>A0A0H2ZL64</accession>
<organism evidence="8">
    <name type="scientific">Streptococcus pneumoniae serotype 2 (strain D39 / NCTC 7466)</name>
    <dbReference type="NCBI Taxonomy" id="373153"/>
    <lineage>
        <taxon>Bacteria</taxon>
        <taxon>Bacillati</taxon>
        <taxon>Bacillota</taxon>
        <taxon>Bacilli</taxon>
        <taxon>Lactobacillales</taxon>
        <taxon>Streptococcaceae</taxon>
        <taxon>Streptococcus</taxon>
    </lineage>
</organism>
<protein>
    <recommendedName>
        <fullName evidence="7">Pullulanase A</fullName>
        <ecNumber evidence="1">3.2.1.41</ecNumber>
    </recommendedName>
    <alternativeName>
        <fullName evidence="7">Alpha-dextrin endo-1,6-alpha-glucosidase</fullName>
    </alternativeName>
    <alternativeName>
        <fullName evidence="7">Pullulan 6-glucanohydrolase</fullName>
    </alternativeName>
</protein>
<keyword id="KW-0106">Calcium</keyword>
<keyword id="KW-0134">Cell wall</keyword>
<keyword id="KW-0326">Glycosidase</keyword>
<keyword id="KW-0378">Hydrolase</keyword>
<keyword id="KW-0479">Metal-binding</keyword>
<keyword id="KW-0572">Peptidoglycan-anchor</keyword>
<keyword id="KW-1185">Reference proteome</keyword>
<keyword id="KW-0964">Secreted</keyword>
<keyword id="KW-0732">Signal</keyword>
<keyword id="KW-0843">Virulence</keyword>
<name>PULA_STRP2</name>
<sequence>MRKTPSHTEKKMVYSIRSLKNGTGSVLIGASLVLLAMATPTISSDESTPTTNEPNNRNTTTLAQPLTDTAADSGKNESDISSPRNANASLEKTEEKPATEPTTSTSPVTTETKAEEPIEDNYFRIHVKKLPEENKDAQGLWTWDDVEKPSENWPNGALSFKDAKKDDYGYYLDVKLKGEQAKKISFLINNTAGKNLTGDKSVEKLVPKMNEAWLDQDYKVFSYEPQPAGTVRVNYYRTDGNYDKKSLWYWGDVKNPSSAQWPDGTDFTATGKYGRYIDIPLNEAAREFGFLLLDESKQGDDVKIRKENYKFTDLKNHSQIFLKDDDESIYTNPYYVHDIRMTGAQHVGTSSIESSFSTLVGAKKEDILKHSNITNHLGNKVTITDVAIDEAGKKVTYSGDFSDTKHPYTVSYNSDQFTTKTSWHLKDETYSYDGKLGADLKEEGKQVDLTLWSPSADKVSVVVYDKNDPDKVVGTVALEKGERGTWKQTLDSTNKLGITDFTGYYYQYQIERQGKTVLALDPYAKSLAAWNSDDAKIDDAHKVAKAAFVDPAKLGPQDLTYGKIHNFKTREDAVIYEAHVRDFTSDPAIAKDLTKPFGTFEAFIEKLDYLKDLGVTHIQLLPVLSYYFVNELKNHERLSDYASSNSNYNWGYDPQNYFSLTGMYSSDPKNPEKRIAEFKNLINEIHKRGMGAILDVVYNHTAKVDIFEDLEPNYYHFMDADGTPRTSFGGGRLGTTHHMTKRLLVDSIKYLVDTYKVDGFRFDMMGDHDAASIEEAYKAARALNPNLIMLGEGWRTYAGDENMPTKAADQDWMKHTDTVAVFSDDIRNNLKSGYPNEGQPAFITGGKRDVNTIFKNLIAQPTNFEADSPGDVIQYIAAHDNLTLFDIIAQSIKKDPSKAENYAEIHRRLRLGNLMVLTAQGTPFIHSGQEYGRTKQFRDPAYKTPVAEDKVPNKSHLLRDKDGNPFDYPYFIHDSYDSSDAVNKFDWTKATDGKAYPENVKSRDYMKGLIALRQSTDAFRLKSLQDIKDRVHLITVPGQNGVEKEDVVIGYQITAPNGDIYAVFVNADEKAREFNLGTAFAHLRNAEVLADENQAGSVGIANPKGLEWTEKGLKLNALTATVLRVSQNGTSHESTAEEKPDSTPSKPEHQDPAPEARPDSTKPDAKVADAENKPSQATADSQAEQPAQEAQASSVKEAVQNESVENSSKKNIPATPDRQAELPNTGIKNENKLLFAGISLLALLGLGFLLKNKKEN</sequence>
<evidence type="ECO:0000250" key="1">
    <source>
        <dbReference type="UniProtKB" id="A0A0H2UNG0"/>
    </source>
</evidence>
<evidence type="ECO:0000250" key="2">
    <source>
        <dbReference type="UniProtKB" id="Q9F930"/>
    </source>
</evidence>
<evidence type="ECO:0000255" key="3"/>
<evidence type="ECO:0000255" key="4">
    <source>
        <dbReference type="PROSITE-ProRule" id="PRU00477"/>
    </source>
</evidence>
<evidence type="ECO:0000256" key="5">
    <source>
        <dbReference type="SAM" id="MobiDB-lite"/>
    </source>
</evidence>
<evidence type="ECO:0000269" key="6">
    <source>
    </source>
</evidence>
<evidence type="ECO:0000305" key="7"/>
<evidence type="ECO:0000312" key="8">
    <source>
        <dbReference type="EMBL" id="ABJ53695.1"/>
    </source>
</evidence>
<evidence type="ECO:0000312" key="9">
    <source>
        <dbReference type="Proteomes" id="UP000001452"/>
    </source>
</evidence>
<comment type="function">
    <text evidence="1 6">Virulence factor (PubMed:17041037). Involved in the degradation of glycogen of the mammalian host cells. Hydrolyzes the alpha-1,6-branchpoints of glycogen. Hydrolyzes pullulan. Does not hydrolyze dextran. Binds to mouse lung alveolar type II cells that are rich in glycogen stores. Is an alpha-glucan-specific carbohydrate-binding protein, which binds to amylose (pure alpha-(1,4)-linked glucose), amylopectin (alpha-(1,4)-linked glucose with alpha-(1,6) branch points), pullulan (linear polymer of mixed alpha-(1,4)- and alpha-(1,6)-linked glucose) and glycogen (similar to amylopectin with more frequent alpha-(1,6) branch points) in vitro. Does not bind to dextran (a linear polymer of alpha-(1,6)-linked glucose) (By similarity).</text>
</comment>
<comment type="catalytic activity">
    <reaction evidence="1">
        <text>Hydrolysis of (1-&gt;6)-alpha-D-glucosidic linkages in pullulan, amylopectin and glycogen, and in the alpha- and beta-limit dextrins of amylopectin and glycogen.</text>
        <dbReference type="EC" id="3.2.1.41"/>
    </reaction>
</comment>
<comment type="activity regulation">
    <text evidence="1">Inhibited by 4-O-alpha-D-glucopyranosylmoranoline (G1M).</text>
</comment>
<comment type="subcellular location">
    <subcellularLocation>
        <location evidence="4">Secreted</location>
        <location evidence="4">Cell wall</location>
        <topology evidence="4">Peptidoglycan-anchor</topology>
    </subcellularLocation>
    <subcellularLocation>
        <location evidence="2">Cell surface</location>
    </subcellularLocation>
    <text evidence="1">Localizes to cytoplasm in the lung alveolar type II cells of the mouse and human hosts.</text>
</comment>
<comment type="domain">
    <text evidence="1">The N-terminal tandem family 41 carbohydrate-binding modules (CBM) are involved in carbohydrate binding. The C-terminal glycosyl hydrolase 13 (GH13) domain is involved in catalysis.</text>
</comment>
<comment type="disruption phenotype">
    <text evidence="6">Reduced numbers of pneumococci relative to wild-type 48 hours post-infection in the lungs and blood of the mouse infection model confirming a role for this protein in invasive disease.</text>
</comment>
<comment type="similarity">
    <text evidence="7">Belongs to the glycosyl hydrolase 13 family.</text>
</comment>
<reference evidence="8 9" key="1">
    <citation type="journal article" date="2007" name="J. Bacteriol.">
        <title>Genome sequence of Avery's virulent serotype 2 strain D39 of Streptococcus pneumoniae and comparison with that of unencapsulated laboratory strain R6.</title>
        <authorList>
            <person name="Lanie J.A."/>
            <person name="Ng W.-L."/>
            <person name="Kazmierczak K.M."/>
            <person name="Andrzejewski T.M."/>
            <person name="Davidsen T.M."/>
            <person name="Wayne K.J."/>
            <person name="Tettelin H."/>
            <person name="Glass J.I."/>
            <person name="Winkler M.E."/>
        </authorList>
    </citation>
    <scope>NUCLEOTIDE SEQUENCE [LARGE SCALE GENOMIC DNA]</scope>
    <source>
        <strain evidence="9">D39 / NCTC 7466</strain>
    </source>
</reference>
<reference key="2">
    <citation type="journal article" date="2011" name="Structure">
        <title>The conformation and function of a multimodular glycogen-degrading pneumococcal virulence factor.</title>
        <authorList>
            <person name="Lammerts van Bueren A."/>
            <person name="Ficko-Blean E."/>
            <person name="Pluvinage B."/>
            <person name="Hehemann J.H."/>
            <person name="Higgins M.A."/>
            <person name="Deng L."/>
            <person name="Ogunniyi A.D."/>
            <person name="Stroeher U.H."/>
            <person name="El Warry N."/>
            <person name="Burke R.D."/>
            <person name="Czjzek M."/>
            <person name="Paton J.C."/>
            <person name="Vocadlo D.J."/>
            <person name="Boraston A.B."/>
        </authorList>
    </citation>
    <scope>FUNCTION</scope>
    <scope>DISRUPTION PHENOTYPE</scope>
</reference>
<proteinExistence type="inferred from homology"/>
<gene>
    <name evidence="7" type="primary">spuA</name>
    <name evidence="8" type="ordered locus">SPD_0250</name>
</gene>
<feature type="signal peptide" evidence="3">
    <location>
        <begin position="1"/>
        <end position="44"/>
    </location>
</feature>
<feature type="chain" id="PRO_5002603613" description="Pullulanase A" evidence="3">
    <location>
        <begin position="45"/>
        <end position="1256"/>
    </location>
</feature>
<feature type="propeptide" id="PRO_5018356435" description="Removed by sortase" evidence="4">
    <location>
        <begin position="1226"/>
        <end position="1256"/>
    </location>
</feature>
<feature type="region of interest" description="Disordered" evidence="5">
    <location>
        <begin position="42"/>
        <end position="117"/>
    </location>
</feature>
<feature type="region of interest" description="Disordered" evidence="5">
    <location>
        <begin position="1126"/>
        <end position="1224"/>
    </location>
</feature>
<feature type="short sequence motif" description="LPXTG sorting signal" evidence="4">
    <location>
        <begin position="1222"/>
        <end position="1226"/>
    </location>
</feature>
<feature type="compositionally biased region" description="Low complexity" evidence="5">
    <location>
        <begin position="48"/>
        <end position="61"/>
    </location>
</feature>
<feature type="compositionally biased region" description="Polar residues" evidence="5">
    <location>
        <begin position="79"/>
        <end position="90"/>
    </location>
</feature>
<feature type="compositionally biased region" description="Low complexity" evidence="5">
    <location>
        <begin position="99"/>
        <end position="111"/>
    </location>
</feature>
<feature type="compositionally biased region" description="Basic and acidic residues" evidence="5">
    <location>
        <begin position="1134"/>
        <end position="1172"/>
    </location>
</feature>
<feature type="compositionally biased region" description="Low complexity" evidence="5">
    <location>
        <begin position="1181"/>
        <end position="1194"/>
    </location>
</feature>
<feature type="compositionally biased region" description="Polar residues" evidence="5">
    <location>
        <begin position="1200"/>
        <end position="1210"/>
    </location>
</feature>
<feature type="active site" description="Nucleophile" evidence="1">
    <location>
        <position position="763"/>
    </location>
</feature>
<feature type="active site" description="Proton donor" evidence="1">
    <location>
        <position position="792"/>
    </location>
</feature>
<feature type="binding site" evidence="1">
    <location>
        <begin position="141"/>
        <end position="143"/>
    </location>
    <ligand>
        <name>substrate</name>
    </ligand>
</feature>
<feature type="binding site" evidence="1">
    <location>
        <position position="153"/>
    </location>
    <ligand>
        <name>substrate</name>
    </ligand>
</feature>
<feature type="binding site" evidence="1">
    <location>
        <position position="199"/>
    </location>
    <ligand>
        <name>substrate</name>
    </ligand>
</feature>
<feature type="binding site" evidence="1">
    <location>
        <begin position="248"/>
        <end position="250"/>
    </location>
    <ligand>
        <name>substrate</name>
    </ligand>
</feature>
<feature type="binding site" evidence="1">
    <location>
        <position position="261"/>
    </location>
    <ligand>
        <name>substrate</name>
    </ligand>
</feature>
<feature type="binding site" evidence="1">
    <location>
        <position position="303"/>
    </location>
    <ligand>
        <name>substrate</name>
    </ligand>
</feature>
<feature type="binding site" evidence="1">
    <location>
        <position position="308"/>
    </location>
    <ligand>
        <name>substrate</name>
    </ligand>
</feature>
<feature type="binding site" evidence="1">
    <location>
        <position position="646"/>
    </location>
    <ligand>
        <name>Ca(2+)</name>
        <dbReference type="ChEBI" id="CHEBI:29108"/>
        <label>1</label>
    </ligand>
</feature>
<feature type="binding site" evidence="1">
    <location>
        <position position="648"/>
    </location>
    <ligand>
        <name>Ca(2+)</name>
        <dbReference type="ChEBI" id="CHEBI:29108"/>
        <label>1</label>
    </ligand>
</feature>
<feature type="binding site" evidence="1">
    <location>
        <begin position="652"/>
        <end position="653"/>
    </location>
    <ligand>
        <name>substrate</name>
    </ligand>
</feature>
<feature type="binding site" evidence="1">
    <location>
        <position position="728"/>
    </location>
    <ligand>
        <name>substrate</name>
    </ligand>
</feature>
<feature type="binding site" evidence="1">
    <location>
        <position position="794"/>
    </location>
    <ligand>
        <name>substrate</name>
    </ligand>
</feature>
<feature type="binding site" evidence="1">
    <location>
        <position position="813"/>
    </location>
    <ligand>
        <name>Ca(2+)</name>
        <dbReference type="ChEBI" id="CHEBI:29108"/>
        <label>2</label>
    </ligand>
</feature>
<feature type="binding site" evidence="1">
    <location>
        <position position="816"/>
    </location>
    <ligand>
        <name>Ca(2+)</name>
        <dbReference type="ChEBI" id="CHEBI:29108"/>
        <label>2</label>
    </ligand>
</feature>
<feature type="binding site" evidence="1">
    <location>
        <position position="817"/>
    </location>
    <ligand>
        <name>Ca(2+)</name>
        <dbReference type="ChEBI" id="CHEBI:29108"/>
        <label>2</label>
    </ligand>
</feature>
<feature type="binding site" evidence="1">
    <location>
        <position position="824"/>
    </location>
    <ligand>
        <name>substrate</name>
    </ligand>
</feature>
<feature type="binding site" evidence="1">
    <location>
        <position position="827"/>
    </location>
    <ligand>
        <name>substrate</name>
    </ligand>
</feature>
<feature type="binding site" evidence="1">
    <location>
        <position position="834"/>
    </location>
    <ligand>
        <name>substrate</name>
    </ligand>
</feature>
<feature type="binding site" evidence="1">
    <location>
        <position position="867"/>
    </location>
    <ligand>
        <name>Ca(2+)</name>
        <dbReference type="ChEBI" id="CHEBI:29108"/>
        <label>2</label>
    </ligand>
</feature>
<feature type="binding site" evidence="1">
    <location>
        <position position="871"/>
    </location>
    <ligand>
        <name>Ca(2+)</name>
        <dbReference type="ChEBI" id="CHEBI:29108"/>
        <label>2</label>
    </ligand>
</feature>
<feature type="binding site" evidence="1">
    <location>
        <position position="881"/>
    </location>
    <ligand>
        <name>substrate</name>
    </ligand>
</feature>
<feature type="binding site" evidence="1">
    <location>
        <position position="954"/>
    </location>
    <ligand>
        <name>substrate</name>
    </ligand>
</feature>
<feature type="binding site" evidence="1">
    <location>
        <begin position="974"/>
        <end position="976"/>
    </location>
    <ligand>
        <name>substrate</name>
    </ligand>
</feature>
<feature type="binding site" evidence="1">
    <location>
        <position position="977"/>
    </location>
    <ligand>
        <name>Ca(2+)</name>
        <dbReference type="ChEBI" id="CHEBI:29108"/>
        <label>1</label>
    </ligand>
</feature>
<feature type="site" description="Transition state stabilizer" evidence="1">
    <location>
        <position position="880"/>
    </location>
</feature>
<feature type="modified residue" description="Pentaglycyl murein peptidoglycan amidated threonine" evidence="4">
    <location>
        <position position="1225"/>
    </location>
</feature>
<dbReference type="EC" id="3.2.1.41" evidence="1"/>
<dbReference type="EMBL" id="CP000410">
    <property type="protein sequence ID" value="ABJ53695.1"/>
    <property type="molecule type" value="Genomic_DNA"/>
</dbReference>
<dbReference type="RefSeq" id="WP_001232763.1">
    <property type="nucleotide sequence ID" value="NZ_JAMLJR010000002.1"/>
</dbReference>
<dbReference type="SMR" id="A0A0H2ZL64"/>
<dbReference type="PaxDb" id="373153-SPD_0250"/>
<dbReference type="KEGG" id="spd:SPD_0250"/>
<dbReference type="eggNOG" id="COG0508">
    <property type="taxonomic scope" value="Bacteria"/>
</dbReference>
<dbReference type="eggNOG" id="COG1523">
    <property type="taxonomic scope" value="Bacteria"/>
</dbReference>
<dbReference type="HOGENOM" id="CLU_004744_0_0_9"/>
<dbReference type="BioCyc" id="SPNE373153:G1G6V-274-MONOMER"/>
<dbReference type="Proteomes" id="UP000001452">
    <property type="component" value="Chromosome"/>
</dbReference>
<dbReference type="GO" id="GO:0009986">
    <property type="term" value="C:cell surface"/>
    <property type="evidence" value="ECO:0007669"/>
    <property type="project" value="UniProtKB-SubCell"/>
</dbReference>
<dbReference type="GO" id="GO:0005576">
    <property type="term" value="C:extracellular region"/>
    <property type="evidence" value="ECO:0007669"/>
    <property type="project" value="UniProtKB-KW"/>
</dbReference>
<dbReference type="GO" id="GO:0030246">
    <property type="term" value="F:carbohydrate binding"/>
    <property type="evidence" value="ECO:0007669"/>
    <property type="project" value="InterPro"/>
</dbReference>
<dbReference type="GO" id="GO:0046872">
    <property type="term" value="F:metal ion binding"/>
    <property type="evidence" value="ECO:0007669"/>
    <property type="project" value="UniProtKB-KW"/>
</dbReference>
<dbReference type="GO" id="GO:0051060">
    <property type="term" value="F:pullulanase activity"/>
    <property type="evidence" value="ECO:0007669"/>
    <property type="project" value="UniProtKB-EC"/>
</dbReference>
<dbReference type="GO" id="GO:0005975">
    <property type="term" value="P:carbohydrate metabolic process"/>
    <property type="evidence" value="ECO:0007669"/>
    <property type="project" value="InterPro"/>
</dbReference>
<dbReference type="CDD" id="cd11341">
    <property type="entry name" value="AmyAc_Pullulanase_LD-like"/>
    <property type="match status" value="1"/>
</dbReference>
<dbReference type="CDD" id="cd10315">
    <property type="entry name" value="CBM41_pullulanase"/>
    <property type="match status" value="2"/>
</dbReference>
<dbReference type="CDD" id="cd02860">
    <property type="entry name" value="E_set_Pullulanase"/>
    <property type="match status" value="1"/>
</dbReference>
<dbReference type="Gene3D" id="2.60.40.1110">
    <property type="match status" value="2"/>
</dbReference>
<dbReference type="Gene3D" id="2.60.40.1220">
    <property type="match status" value="1"/>
</dbReference>
<dbReference type="Gene3D" id="3.20.20.80">
    <property type="entry name" value="Glycosidases"/>
    <property type="match status" value="1"/>
</dbReference>
<dbReference type="Gene3D" id="2.60.40.1180">
    <property type="entry name" value="Golgi alpha-mannosidase II"/>
    <property type="match status" value="1"/>
</dbReference>
<dbReference type="Gene3D" id="2.60.40.10">
    <property type="entry name" value="Immunoglobulins"/>
    <property type="match status" value="1"/>
</dbReference>
<dbReference type="InterPro" id="IPR013784">
    <property type="entry name" value="Carb-bd-like_fold"/>
</dbReference>
<dbReference type="InterPro" id="IPR005323">
    <property type="entry name" value="CBM41_pullulanase"/>
</dbReference>
<dbReference type="InterPro" id="IPR014755">
    <property type="entry name" value="Cu-Rt/internalin_Ig-like"/>
</dbReference>
<dbReference type="InterPro" id="IPR006047">
    <property type="entry name" value="Glyco_hydro_13_cat_dom"/>
</dbReference>
<dbReference type="InterPro" id="IPR004193">
    <property type="entry name" value="Glyco_hydro_13_N"/>
</dbReference>
<dbReference type="InterPro" id="IPR013780">
    <property type="entry name" value="Glyco_hydro_b"/>
</dbReference>
<dbReference type="InterPro" id="IPR017853">
    <property type="entry name" value="Glycoside_hydrolase_SF"/>
</dbReference>
<dbReference type="InterPro" id="IPR013783">
    <property type="entry name" value="Ig-like_fold"/>
</dbReference>
<dbReference type="InterPro" id="IPR014756">
    <property type="entry name" value="Ig_E-set"/>
</dbReference>
<dbReference type="InterPro" id="IPR019931">
    <property type="entry name" value="LPXTG_anchor"/>
</dbReference>
<dbReference type="InterPro" id="IPR011838">
    <property type="entry name" value="Pullulan_Gpos"/>
</dbReference>
<dbReference type="InterPro" id="IPR040806">
    <property type="entry name" value="SpuA_C"/>
</dbReference>
<dbReference type="InterPro" id="IPR005877">
    <property type="entry name" value="YSIRK_signal_dom"/>
</dbReference>
<dbReference type="NCBIfam" id="TIGR01167">
    <property type="entry name" value="LPXTG_anchor"/>
    <property type="match status" value="1"/>
</dbReference>
<dbReference type="NCBIfam" id="TIGR02102">
    <property type="entry name" value="pullulan_Gpos"/>
    <property type="match status" value="1"/>
</dbReference>
<dbReference type="NCBIfam" id="TIGR01168">
    <property type="entry name" value="YSIRK_signal"/>
    <property type="match status" value="1"/>
</dbReference>
<dbReference type="PANTHER" id="PTHR43002">
    <property type="entry name" value="GLYCOGEN DEBRANCHING ENZYME"/>
    <property type="match status" value="1"/>
</dbReference>
<dbReference type="Pfam" id="PF00128">
    <property type="entry name" value="Alpha-amylase"/>
    <property type="match status" value="1"/>
</dbReference>
<dbReference type="Pfam" id="PF02922">
    <property type="entry name" value="CBM_48"/>
    <property type="match status" value="1"/>
</dbReference>
<dbReference type="Pfam" id="PF00746">
    <property type="entry name" value="Gram_pos_anchor"/>
    <property type="match status" value="1"/>
</dbReference>
<dbReference type="Pfam" id="PF03714">
    <property type="entry name" value="PUD"/>
    <property type="match status" value="2"/>
</dbReference>
<dbReference type="Pfam" id="PF18033">
    <property type="entry name" value="SpuA_C"/>
    <property type="match status" value="1"/>
</dbReference>
<dbReference type="Pfam" id="PF04650">
    <property type="entry name" value="YSIRK_signal"/>
    <property type="match status" value="1"/>
</dbReference>
<dbReference type="SMART" id="SM00642">
    <property type="entry name" value="Aamy"/>
    <property type="match status" value="1"/>
</dbReference>
<dbReference type="SUPFAM" id="SSF51445">
    <property type="entry name" value="(Trans)glycosidases"/>
    <property type="match status" value="1"/>
</dbReference>
<dbReference type="SUPFAM" id="SSF81296">
    <property type="entry name" value="E set domains"/>
    <property type="match status" value="1"/>
</dbReference>
<dbReference type="SUPFAM" id="SSF49452">
    <property type="entry name" value="Starch-binding domain-like"/>
    <property type="match status" value="2"/>
</dbReference>
<dbReference type="PROSITE" id="PS50847">
    <property type="entry name" value="GRAM_POS_ANCHORING"/>
    <property type="match status" value="1"/>
</dbReference>